<organism>
    <name type="scientific">Hadronyche infensa</name>
    <name type="common">Fraser island funnel-web spider</name>
    <name type="synonym">Atrax infensus</name>
    <dbReference type="NCBI Taxonomy" id="153481"/>
    <lineage>
        <taxon>Eukaryota</taxon>
        <taxon>Metazoa</taxon>
        <taxon>Ecdysozoa</taxon>
        <taxon>Arthropoda</taxon>
        <taxon>Chelicerata</taxon>
        <taxon>Arachnida</taxon>
        <taxon>Araneae</taxon>
        <taxon>Mygalomorphae</taxon>
        <taxon>Hexathelidae</taxon>
        <taxon>Hadronyche</taxon>
    </lineage>
</organism>
<name>TE1A_HADIN</name>
<protein>
    <recommendedName>
        <fullName evidence="2">U14-hexatoxin-Hi1a</fullName>
        <shortName evidence="2">U14-HXTX-Hi1a</shortName>
    </recommendedName>
    <alternativeName>
        <fullName evidence="2">SF19 peptide</fullName>
    </alternativeName>
</protein>
<keyword id="KW-1015">Disulfide bond</keyword>
<keyword id="KW-0872">Ion channel impairing toxin</keyword>
<keyword id="KW-0960">Knottin</keyword>
<keyword id="KW-0964">Secreted</keyword>
<keyword id="KW-0732">Signal</keyword>
<keyword id="KW-0800">Toxin</keyword>
<evidence type="ECO:0000255" key="1"/>
<evidence type="ECO:0000303" key="2">
    <source>
    </source>
</evidence>
<evidence type="ECO:0000305" key="3"/>
<evidence type="ECO:0000305" key="4">
    <source>
    </source>
</evidence>
<evidence type="ECO:0000312" key="5">
    <source>
        <dbReference type="EMBL" id="CDZ18874.1"/>
    </source>
</evidence>
<reference key="1">
    <citation type="journal article" date="2020" name="Proc. Natl. Acad. Sci. U.S.A.">
        <title>Structural venomics reveals evolution of a complex venom by duplication and diversification of an ancient peptide-encoding gene.</title>
        <authorList>
            <person name="Pineda S.S."/>
            <person name="Chin Y.K."/>
            <person name="Undheim E.A.B."/>
            <person name="Senff S."/>
            <person name="Mobli M."/>
            <person name="Dauly C."/>
            <person name="Escoubas P."/>
            <person name="Nicholson G.M."/>
            <person name="Kaas Q."/>
            <person name="Guo S."/>
            <person name="Herzig V."/>
            <person name="Mattick J.S."/>
            <person name="King G.F."/>
        </authorList>
    </citation>
    <scope>NUCLEOTIDE SEQUENCE [MRNA]</scope>
    <source>
        <tissue>Venom gland</tissue>
    </source>
</reference>
<reference evidence="5" key="2">
    <citation type="thesis" date="2012" institute="The University of Queensland" country="Australia">
        <title>Probing the chemical diversity of venom from the Australian Funnel-web spider Hadronyche infensa.</title>
        <authorList>
            <person name="Pineda S.S."/>
        </authorList>
    </citation>
    <scope>NUCLEOTIDE SEQUENCE [MRNA]</scope>
    <source>
        <tissue>Venom gland</tissue>
    </source>
</reference>
<reference evidence="5" key="3">
    <citation type="submission" date="2014-07" db="EMBL/GenBank/DDBJ databases">
        <authorList>
            <person name="Zhang J.E."/>
            <person name="Yang H."/>
            <person name="Guo J."/>
            <person name="Deng Z."/>
            <person name="Luo H."/>
            <person name="Luo M."/>
            <person name="Zhao B."/>
        </authorList>
    </citation>
    <scope>NUCLEOTIDE SEQUENCE [MRNA]</scope>
    <source>
        <tissue>Venom gland</tissue>
    </source>
</reference>
<comment type="function">
    <text evidence="3">Probable ion channel inhibitor.</text>
</comment>
<comment type="subcellular location">
    <subcellularLocation>
        <location evidence="4">Secreted</location>
    </subcellularLocation>
</comment>
<comment type="tissue specificity">
    <text evidence="4">Expressed by the venom gland.</text>
</comment>
<comment type="domain">
    <text evidence="3">The presence of a 'disulfide through disulfide knot' structurally defines this protein as a knottin.</text>
</comment>
<dbReference type="EMBL" id="HACE01000090">
    <property type="protein sequence ID" value="CDZ18874.1"/>
    <property type="molecule type" value="mRNA"/>
</dbReference>
<dbReference type="GO" id="GO:0005576">
    <property type="term" value="C:extracellular region"/>
    <property type="evidence" value="ECO:0007669"/>
    <property type="project" value="UniProtKB-SubCell"/>
</dbReference>
<dbReference type="GO" id="GO:0099106">
    <property type="term" value="F:ion channel regulator activity"/>
    <property type="evidence" value="ECO:0007669"/>
    <property type="project" value="UniProtKB-KW"/>
</dbReference>
<dbReference type="GO" id="GO:0090729">
    <property type="term" value="F:toxin activity"/>
    <property type="evidence" value="ECO:0007669"/>
    <property type="project" value="UniProtKB-KW"/>
</dbReference>
<accession>A0A1D0BRB6</accession>
<sequence>MMQLAVLICLSLVVNTFAQSCVQDSDCGNDDQCCLYSACATKPGEMFVEESGEGALAKVACSVPAPRALGFVGIHL</sequence>
<feature type="signal peptide" evidence="1">
    <location>
        <begin position="1"/>
        <end position="18"/>
    </location>
</feature>
<feature type="chain" id="PRO_5008896995" description="U14-hexatoxin-Hi1a" evidence="1">
    <location>
        <begin position="19"/>
        <end position="76"/>
    </location>
</feature>
<feature type="disulfide bond" evidence="4">
    <location>
        <begin position="21"/>
        <end position="34"/>
    </location>
</feature>
<feature type="disulfide bond" evidence="4">
    <location>
        <begin position="27"/>
        <end position="39"/>
    </location>
</feature>
<feature type="disulfide bond" evidence="4">
    <location>
        <begin position="33"/>
        <end position="61"/>
    </location>
</feature>
<proteinExistence type="inferred from homology"/>